<dbReference type="EMBL" id="AB028741">
    <property type="protein sequence ID" value="BAA95213.1"/>
    <property type="molecule type" value="mRNA"/>
</dbReference>
<dbReference type="EMBL" id="AY453396">
    <property type="protein sequence ID" value="AAS47513.1"/>
    <property type="molecule type" value="mRNA"/>
</dbReference>
<dbReference type="EMBL" id="BT007150">
    <property type="protein sequence ID" value="AAP35814.1"/>
    <property type="molecule type" value="mRNA"/>
</dbReference>
<dbReference type="EMBL" id="BT020135">
    <property type="protein sequence ID" value="AAV38937.1"/>
    <property type="molecule type" value="mRNA"/>
</dbReference>
<dbReference type="EMBL" id="BC014613">
    <property type="protein sequence ID" value="AAH14613.1"/>
    <property type="molecule type" value="mRNA"/>
</dbReference>
<dbReference type="CCDS" id="CCDS3377.1"/>
<dbReference type="RefSeq" id="NP_001333210.1">
    <property type="nucleotide sequence ID" value="NM_001346281.1"/>
</dbReference>
<dbReference type="RefSeq" id="NP_001333211.1">
    <property type="nucleotide sequence ID" value="NM_001346282.1"/>
</dbReference>
<dbReference type="RefSeq" id="NP_001333229.1">
    <property type="nucleotide sequence ID" value="NM_001346300.1"/>
</dbReference>
<dbReference type="RefSeq" id="NP_058626.1">
    <property type="nucleotide sequence ID" value="NM_016930.4"/>
</dbReference>
<dbReference type="SMR" id="Q9P2W9"/>
<dbReference type="BioGRID" id="119782">
    <property type="interactions" value="189"/>
</dbReference>
<dbReference type="DIP" id="DIP-37617N"/>
<dbReference type="FunCoup" id="Q9P2W9">
    <property type="interactions" value="2716"/>
</dbReference>
<dbReference type="IntAct" id="Q9P2W9">
    <property type="interactions" value="79"/>
</dbReference>
<dbReference type="MINT" id="Q9P2W9"/>
<dbReference type="STRING" id="9606.ENSP00000305810"/>
<dbReference type="iPTMnet" id="Q9P2W9"/>
<dbReference type="PhosphoSitePlus" id="Q9P2W9"/>
<dbReference type="BioMuta" id="STX18"/>
<dbReference type="DMDM" id="17369347"/>
<dbReference type="jPOST" id="Q9P2W9"/>
<dbReference type="MassIVE" id="Q9P2W9"/>
<dbReference type="PaxDb" id="9606-ENSP00000305810"/>
<dbReference type="PeptideAtlas" id="Q9P2W9"/>
<dbReference type="ProteomicsDB" id="83906"/>
<dbReference type="Pumba" id="Q9P2W9"/>
<dbReference type="Antibodypedia" id="727">
    <property type="antibodies" value="143 antibodies from 25 providers"/>
</dbReference>
<dbReference type="DNASU" id="53407"/>
<dbReference type="Ensembl" id="ENST00000306200.7">
    <property type="protein sequence ID" value="ENSP00000305810.2"/>
    <property type="gene ID" value="ENSG00000168818.10"/>
</dbReference>
<dbReference type="GeneID" id="53407"/>
<dbReference type="KEGG" id="hsa:53407"/>
<dbReference type="MANE-Select" id="ENST00000306200.7">
    <property type="protein sequence ID" value="ENSP00000305810.2"/>
    <property type="RefSeq nucleotide sequence ID" value="NM_016930.4"/>
    <property type="RefSeq protein sequence ID" value="NP_058626.1"/>
</dbReference>
<dbReference type="UCSC" id="uc003gic.4">
    <property type="organism name" value="human"/>
</dbReference>
<dbReference type="AGR" id="HGNC:15942"/>
<dbReference type="CTD" id="53407"/>
<dbReference type="DisGeNET" id="53407"/>
<dbReference type="GeneCards" id="STX18"/>
<dbReference type="HGNC" id="HGNC:15942">
    <property type="gene designation" value="STX18"/>
</dbReference>
<dbReference type="HPA" id="ENSG00000168818">
    <property type="expression patterns" value="Tissue enhanced (cervix)"/>
</dbReference>
<dbReference type="MIM" id="606046">
    <property type="type" value="gene"/>
</dbReference>
<dbReference type="neXtProt" id="NX_Q9P2W9"/>
<dbReference type="OpenTargets" id="ENSG00000168818"/>
<dbReference type="PharmGKB" id="PA38061"/>
<dbReference type="VEuPathDB" id="HostDB:ENSG00000168818"/>
<dbReference type="eggNOG" id="KOG3894">
    <property type="taxonomic scope" value="Eukaryota"/>
</dbReference>
<dbReference type="GeneTree" id="ENSGT00390000014853"/>
<dbReference type="HOGENOM" id="CLU_071402_1_0_1"/>
<dbReference type="InParanoid" id="Q9P2W9"/>
<dbReference type="OMA" id="FVFQCRE"/>
<dbReference type="OrthoDB" id="342981at2759"/>
<dbReference type="PAN-GO" id="Q9P2W9">
    <property type="GO annotations" value="3 GO annotations based on evolutionary models"/>
</dbReference>
<dbReference type="PhylomeDB" id="Q9P2W9"/>
<dbReference type="TreeFam" id="TF105868"/>
<dbReference type="PathwayCommons" id="Q9P2W9"/>
<dbReference type="Reactome" id="R-HSA-6811434">
    <property type="pathway name" value="COPI-dependent Golgi-to-ER retrograde traffic"/>
</dbReference>
<dbReference type="SignaLink" id="Q9P2W9"/>
<dbReference type="BioGRID-ORCS" id="53407">
    <property type="hits" value="712 hits in 1161 CRISPR screens"/>
</dbReference>
<dbReference type="GenomeRNAi" id="53407"/>
<dbReference type="Pharos" id="Q9P2W9">
    <property type="development level" value="Tbio"/>
</dbReference>
<dbReference type="PRO" id="PR:Q9P2W9"/>
<dbReference type="Proteomes" id="UP000005640">
    <property type="component" value="Chromosome 4"/>
</dbReference>
<dbReference type="RNAct" id="Q9P2W9">
    <property type="molecule type" value="protein"/>
</dbReference>
<dbReference type="Bgee" id="ENSG00000168818">
    <property type="expression patterns" value="Expressed in right uterine tube and 180 other cell types or tissues"/>
</dbReference>
<dbReference type="ExpressionAtlas" id="Q9P2W9">
    <property type="expression patterns" value="baseline and differential"/>
</dbReference>
<dbReference type="GO" id="GO:0005783">
    <property type="term" value="C:endoplasmic reticulum"/>
    <property type="evidence" value="ECO:0000314"/>
    <property type="project" value="UniProtKB"/>
</dbReference>
<dbReference type="GO" id="GO:0005789">
    <property type="term" value="C:endoplasmic reticulum membrane"/>
    <property type="evidence" value="ECO:0000304"/>
    <property type="project" value="Reactome"/>
</dbReference>
<dbReference type="GO" id="GO:0000139">
    <property type="term" value="C:Golgi membrane"/>
    <property type="evidence" value="ECO:0007669"/>
    <property type="project" value="UniProtKB-SubCell"/>
</dbReference>
<dbReference type="GO" id="GO:0031201">
    <property type="term" value="C:SNARE complex"/>
    <property type="evidence" value="ECO:0000318"/>
    <property type="project" value="GO_Central"/>
</dbReference>
<dbReference type="GO" id="GO:0019904">
    <property type="term" value="F:protein domain specific binding"/>
    <property type="evidence" value="ECO:0007669"/>
    <property type="project" value="Ensembl"/>
</dbReference>
<dbReference type="GO" id="GO:0005484">
    <property type="term" value="F:SNAP receptor activity"/>
    <property type="evidence" value="ECO:0007669"/>
    <property type="project" value="InterPro"/>
</dbReference>
<dbReference type="GO" id="GO:0090158">
    <property type="term" value="P:endoplasmic reticulum membrane organization"/>
    <property type="evidence" value="ECO:0000315"/>
    <property type="project" value="UniProtKB"/>
</dbReference>
<dbReference type="GO" id="GO:0006886">
    <property type="term" value="P:intracellular protein transport"/>
    <property type="evidence" value="ECO:0007669"/>
    <property type="project" value="InterPro"/>
</dbReference>
<dbReference type="GO" id="GO:1902953">
    <property type="term" value="P:positive regulation of ER to Golgi vesicle-mediated transport"/>
    <property type="evidence" value="ECO:0000315"/>
    <property type="project" value="UniProtKB"/>
</dbReference>
<dbReference type="GO" id="GO:1902117">
    <property type="term" value="P:positive regulation of organelle assembly"/>
    <property type="evidence" value="ECO:0000315"/>
    <property type="project" value="UniProtKB"/>
</dbReference>
<dbReference type="GO" id="GO:1903358">
    <property type="term" value="P:regulation of Golgi organization"/>
    <property type="evidence" value="ECO:0000315"/>
    <property type="project" value="UniProtKB"/>
</dbReference>
<dbReference type="GO" id="GO:0006890">
    <property type="term" value="P:retrograde vesicle-mediated transport, Golgi to endoplasmic reticulum"/>
    <property type="evidence" value="ECO:0000318"/>
    <property type="project" value="GO_Central"/>
</dbReference>
<dbReference type="CDD" id="cd15850">
    <property type="entry name" value="SNARE_syntaxin18"/>
    <property type="match status" value="1"/>
</dbReference>
<dbReference type="FunFam" id="1.20.5.110:FF:000015">
    <property type="entry name" value="Syntaxin-18, putative"/>
    <property type="match status" value="1"/>
</dbReference>
<dbReference type="Gene3D" id="1.20.5.110">
    <property type="match status" value="1"/>
</dbReference>
<dbReference type="InterPro" id="IPR019529">
    <property type="entry name" value="Syntaxin-18_N"/>
</dbReference>
<dbReference type="InterPro" id="IPR006012">
    <property type="entry name" value="Syntaxin/epimorphin_CS"/>
</dbReference>
<dbReference type="PANTHER" id="PTHR15959">
    <property type="entry name" value="SYNTAXIN-18"/>
    <property type="match status" value="1"/>
</dbReference>
<dbReference type="PANTHER" id="PTHR15959:SF1">
    <property type="entry name" value="SYNTAXIN-18"/>
    <property type="match status" value="1"/>
</dbReference>
<dbReference type="Pfam" id="PF10496">
    <property type="entry name" value="Syntaxin-18_N"/>
    <property type="match status" value="1"/>
</dbReference>
<dbReference type="SUPFAM" id="SSF58038">
    <property type="entry name" value="SNARE fusion complex"/>
    <property type="match status" value="1"/>
</dbReference>
<dbReference type="PROSITE" id="PS00914">
    <property type="entry name" value="SYNTAXIN"/>
    <property type="match status" value="1"/>
</dbReference>
<sequence length="335" mass="38674">MAVDITLLFRASVKTVKTRNKALGVAVGGGVDGSRDELFRRSPRPKGDFSSRAREVISHIGKLRDFLLEHRKDYINAYSHTMSEYGRMTDTERDQIDQDAQIFMRTCSEAIQQLRTEAHKEIHSQQVKEHRTAVLDFIEDYLKRVCKLYSEQRAIRVKRVVDKKRLSKLEPEPNTKTRESTSSEKVSQSPSKDSEENPATEERPEKILAETQPELGTWGDGKGEDELSPEEIQMFEQENQRLIGEMNSLFDEVRQIEGRVVEISRLQEIFTEKVLQQEAEIDSIHQLVVGATENIKEGNEDIREAIKNNAGFRVWILFFLVMCSFSLLFLDWYDS</sequence>
<gene>
    <name type="primary">STX18</name>
    <name type="ORF">GIG9</name>
</gene>
<reference key="1">
    <citation type="journal article" date="2000" name="J. Biol. Chem.">
        <title>Syntaxin 18, a SNAP receptor that functions in the endoplasmic reticulum, intermediate compartment, and cis-Golgi vesicle trafficking.</title>
        <authorList>
            <person name="Hatsuzawa K."/>
            <person name="Hirose H."/>
            <person name="Tani K."/>
            <person name="Yamamoto A."/>
            <person name="Scheller R.H."/>
            <person name="Tagaya M."/>
        </authorList>
    </citation>
    <scope>NUCLEOTIDE SEQUENCE [MRNA]</scope>
    <source>
        <tissue>Brain</tissue>
    </source>
</reference>
<reference key="2">
    <citation type="submission" date="2003-10" db="EMBL/GenBank/DDBJ databases">
        <title>Identification of a human growth inhibiting gene.</title>
        <authorList>
            <person name="Kim J.W."/>
        </authorList>
    </citation>
    <scope>NUCLEOTIDE SEQUENCE [LARGE SCALE MRNA]</scope>
</reference>
<reference key="3">
    <citation type="submission" date="2004-10" db="EMBL/GenBank/DDBJ databases">
        <title>Cloning of human full-length CDSs in BD Creator(TM) system donor vector.</title>
        <authorList>
            <person name="Kalnine N."/>
            <person name="Chen X."/>
            <person name="Rolfs A."/>
            <person name="Halleck A."/>
            <person name="Hines L."/>
            <person name="Eisenstein S."/>
            <person name="Koundinya M."/>
            <person name="Raphael J."/>
            <person name="Moreira D."/>
            <person name="Kelley T."/>
            <person name="LaBaer J."/>
            <person name="Lin Y."/>
            <person name="Phelan M."/>
            <person name="Farmer A."/>
        </authorList>
    </citation>
    <scope>NUCLEOTIDE SEQUENCE [LARGE SCALE MRNA]</scope>
</reference>
<reference key="4">
    <citation type="journal article" date="2004" name="Genome Res.">
        <title>The status, quality, and expansion of the NIH full-length cDNA project: the Mammalian Gene Collection (MGC).</title>
        <authorList>
            <consortium name="The MGC Project Team"/>
        </authorList>
    </citation>
    <scope>NUCLEOTIDE SEQUENCE [LARGE SCALE MRNA]</scope>
    <source>
        <tissue>Muscle</tissue>
    </source>
</reference>
<reference key="5">
    <citation type="journal article" date="2004" name="EMBO J.">
        <title>Implication of ZW10 in membrane trafficking between the endoplasmic reticulum and Golgi.</title>
        <authorList>
            <person name="Hirose H."/>
            <person name="Arasaki K."/>
            <person name="Dohmae N."/>
            <person name="Takio K."/>
            <person name="Hatsuzawa K."/>
            <person name="Nagahama M."/>
            <person name="Tani K."/>
            <person name="Yamamoto A."/>
            <person name="Tohyama M."/>
            <person name="Tagaya M."/>
        </authorList>
    </citation>
    <scope>IDENTIFICATION BY MASS SPECTROMETRY</scope>
    <scope>FUNCTION</scope>
    <scope>SUBCELLULAR LOCATION</scope>
    <scope>IDENTIFICATION IN A COMPLEX WITH USE1L; SEC22B; RINT1 AND ZW10</scope>
</reference>
<reference key="6">
    <citation type="journal article" date="2004" name="EMBO J.">
        <title>Involvement of BNIP1 in apoptosis and endoplasmic reticulum membrane fusion.</title>
        <authorList>
            <person name="Nakajima K."/>
            <person name="Hirose H."/>
            <person name="Taniguchi M."/>
            <person name="Kurashina H."/>
            <person name="Arasaki K."/>
            <person name="Nagahama M."/>
            <person name="Tani K."/>
            <person name="Yamamoto A."/>
            <person name="Tagaya M."/>
        </authorList>
    </citation>
    <scope>INTERACTION WITH BNIP1</scope>
</reference>
<reference key="7">
    <citation type="journal article" date="2011" name="BMC Syst. Biol.">
        <title>Initial characterization of the human central proteome.</title>
        <authorList>
            <person name="Burkard T.R."/>
            <person name="Planyavsky M."/>
            <person name="Kaupe I."/>
            <person name="Breitwieser F.P."/>
            <person name="Buerckstuemmer T."/>
            <person name="Bennett K.L."/>
            <person name="Superti-Furga G."/>
            <person name="Colinge J."/>
        </authorList>
    </citation>
    <scope>IDENTIFICATION BY MASS SPECTROMETRY [LARGE SCALE ANALYSIS]</scope>
</reference>
<reference key="8">
    <citation type="journal article" date="2013" name="J. Proteome Res.">
        <title>Toward a comprehensive characterization of a human cancer cell phosphoproteome.</title>
        <authorList>
            <person name="Zhou H."/>
            <person name="Di Palma S."/>
            <person name="Preisinger C."/>
            <person name="Peng M."/>
            <person name="Polat A.N."/>
            <person name="Heck A.J."/>
            <person name="Mohammed S."/>
        </authorList>
    </citation>
    <scope>IDENTIFICATION BY MASS SPECTROMETRY [LARGE SCALE ANALYSIS]</scope>
    <source>
        <tissue>Erythroleukemia</tissue>
    </source>
</reference>
<reference key="9">
    <citation type="journal article" date="2014" name="J. Proteomics">
        <title>An enzyme assisted RP-RPLC approach for in-depth analysis of human liver phosphoproteome.</title>
        <authorList>
            <person name="Bian Y."/>
            <person name="Song C."/>
            <person name="Cheng K."/>
            <person name="Dong M."/>
            <person name="Wang F."/>
            <person name="Huang J."/>
            <person name="Sun D."/>
            <person name="Wang L."/>
            <person name="Ye M."/>
            <person name="Zou H."/>
        </authorList>
    </citation>
    <scope>IDENTIFICATION BY MASS SPECTROMETRY [LARGE SCALE ANALYSIS]</scope>
    <source>
        <tissue>Liver</tissue>
    </source>
</reference>
<name>STX18_HUMAN</name>
<proteinExistence type="evidence at protein level"/>
<keyword id="KW-0175">Coiled coil</keyword>
<keyword id="KW-0256">Endoplasmic reticulum</keyword>
<keyword id="KW-0931">ER-Golgi transport</keyword>
<keyword id="KW-0333">Golgi apparatus</keyword>
<keyword id="KW-0472">Membrane</keyword>
<keyword id="KW-0653">Protein transport</keyword>
<keyword id="KW-1267">Proteomics identification</keyword>
<keyword id="KW-1185">Reference proteome</keyword>
<keyword id="KW-0812">Transmembrane</keyword>
<keyword id="KW-1133">Transmembrane helix</keyword>
<keyword id="KW-0813">Transport</keyword>
<feature type="chain" id="PRO_0000210231" description="Syntaxin-18">
    <location>
        <begin position="1"/>
        <end position="335"/>
    </location>
</feature>
<feature type="topological domain" description="Cytoplasmic" evidence="1">
    <location>
        <begin position="1"/>
        <end position="309"/>
    </location>
</feature>
<feature type="transmembrane region" description="Helical; Anchor for type IV membrane protein" evidence="1">
    <location>
        <begin position="310"/>
        <end position="330"/>
    </location>
</feature>
<feature type="topological domain" description="Vesicular" evidence="1">
    <location>
        <begin position="331"/>
        <end position="335"/>
    </location>
</feature>
<feature type="domain" description="t-SNARE coiled-coil homology">
    <location>
        <begin position="243"/>
        <end position="305"/>
    </location>
</feature>
<feature type="region of interest" description="Disordered" evidence="2">
    <location>
        <begin position="168"/>
        <end position="226"/>
    </location>
</feature>
<feature type="compositionally biased region" description="Basic and acidic residues" evidence="2">
    <location>
        <begin position="168"/>
        <end position="182"/>
    </location>
</feature>
<feature type="compositionally biased region" description="Basic and acidic residues" evidence="2">
    <location>
        <begin position="192"/>
        <end position="208"/>
    </location>
</feature>
<feature type="sequence variant" id="VAR_052250" description="In dbSNP:rs13134070.">
    <original>D</original>
    <variation>Y</variation>
    <location>
        <position position="32"/>
    </location>
</feature>
<feature type="sequence variant" id="VAR_052251" description="In dbSNP:rs36109375.">
    <original>S</original>
    <variation>G</variation>
    <location>
        <position position="51"/>
    </location>
</feature>
<feature type="sequence variant" id="VAR_052252" description="In dbSNP:rs33952588.">
    <original>S</original>
    <variation>T</variation>
    <location>
        <position position="228"/>
    </location>
</feature>
<feature type="sequence conflict" description="In Ref. 3; AAV38937." evidence="5" ref="3">
    <original>A</original>
    <variation>V</variation>
    <location>
        <position position="11"/>
    </location>
</feature>
<feature type="sequence conflict" description="In Ref. 2; AAS47513." evidence="5" ref="2">
    <original>N</original>
    <variation>D</variation>
    <location>
        <position position="308"/>
    </location>
</feature>
<protein>
    <recommendedName>
        <fullName>Syntaxin-18</fullName>
    </recommendedName>
    <alternativeName>
        <fullName>Cell growth-inhibiting gene 9 protein</fullName>
    </alternativeName>
</protein>
<accession>Q9P2W9</accession>
<accession>Q596L3</accession>
<accession>Q5TZP5</accession>
<comment type="function">
    <text evidence="3">Syntaxin that may be involved in targeting and fusion of Golgi-derived retrograde transport vesicles with the ER.</text>
</comment>
<comment type="subunit">
    <text evidence="3 4">Component of a SNARE complex consisting of STX18, USE1L, BNIP1/SEC20L, and SEC22B. RINT1/TIP20L and ZW10 are associated with the complex through interaction with BNIP1/SEC20L. Interacts directly with USE1L and BNIP1/SEC20L.</text>
</comment>
<comment type="interaction">
    <interactant intactId="EBI-725334">
        <id>Q9P2W9</id>
    </interactant>
    <interactant intactId="EBI-1058865">
        <id>O75396</id>
        <label>SEC22B</label>
    </interactant>
    <organismsDiffer>false</organismsDiffer>
    <experiments>6</experiments>
</comment>
<comment type="interaction">
    <interactant intactId="EBI-725334">
        <id>Q9P2W9</id>
    </interactant>
    <interactant intactId="EBI-742842">
        <id>Q9NZ43</id>
        <label>USE1</label>
    </interactant>
    <organismsDiffer>false</organismsDiffer>
    <experiments>11</experiments>
</comment>
<comment type="subcellular location">
    <subcellularLocation>
        <location evidence="6">Endoplasmic reticulum membrane</location>
        <topology evidence="6">Single-pass type IV membrane protein</topology>
    </subcellularLocation>
    <subcellularLocation>
        <location evidence="5">Golgi apparatus membrane</location>
        <topology evidence="5">Single-pass type IV membrane protein</topology>
    </subcellularLocation>
</comment>
<comment type="tissue specificity">
    <text>Ubiquitous.</text>
</comment>
<comment type="similarity">
    <text evidence="5">Belongs to the syntaxin family.</text>
</comment>
<evidence type="ECO:0000255" key="1"/>
<evidence type="ECO:0000256" key="2">
    <source>
        <dbReference type="SAM" id="MobiDB-lite"/>
    </source>
</evidence>
<evidence type="ECO:0000269" key="3">
    <source>
    </source>
</evidence>
<evidence type="ECO:0000269" key="4">
    <source>
    </source>
</evidence>
<evidence type="ECO:0000305" key="5"/>
<evidence type="ECO:0000305" key="6">
    <source>
    </source>
</evidence>
<organism>
    <name type="scientific">Homo sapiens</name>
    <name type="common">Human</name>
    <dbReference type="NCBI Taxonomy" id="9606"/>
    <lineage>
        <taxon>Eukaryota</taxon>
        <taxon>Metazoa</taxon>
        <taxon>Chordata</taxon>
        <taxon>Craniata</taxon>
        <taxon>Vertebrata</taxon>
        <taxon>Euteleostomi</taxon>
        <taxon>Mammalia</taxon>
        <taxon>Eutheria</taxon>
        <taxon>Euarchontoglires</taxon>
        <taxon>Primates</taxon>
        <taxon>Haplorrhini</taxon>
        <taxon>Catarrhini</taxon>
        <taxon>Hominidae</taxon>
        <taxon>Homo</taxon>
    </lineage>
</organism>